<feature type="chain" id="PRO_1000149251" description="2-isopropylmalate synthase">
    <location>
        <begin position="1"/>
        <end position="519"/>
    </location>
</feature>
<feature type="domain" description="Pyruvate carboxyltransferase" evidence="1">
    <location>
        <begin position="5"/>
        <end position="267"/>
    </location>
</feature>
<feature type="region of interest" description="Regulatory domain" evidence="1">
    <location>
        <begin position="392"/>
        <end position="519"/>
    </location>
</feature>
<feature type="binding site" evidence="1">
    <location>
        <position position="14"/>
    </location>
    <ligand>
        <name>Mn(2+)</name>
        <dbReference type="ChEBI" id="CHEBI:29035"/>
    </ligand>
</feature>
<feature type="binding site" evidence="1">
    <location>
        <position position="202"/>
    </location>
    <ligand>
        <name>Mn(2+)</name>
        <dbReference type="ChEBI" id="CHEBI:29035"/>
    </ligand>
</feature>
<feature type="binding site" evidence="1">
    <location>
        <position position="204"/>
    </location>
    <ligand>
        <name>Mn(2+)</name>
        <dbReference type="ChEBI" id="CHEBI:29035"/>
    </ligand>
</feature>
<feature type="binding site" evidence="1">
    <location>
        <position position="238"/>
    </location>
    <ligand>
        <name>Mn(2+)</name>
        <dbReference type="ChEBI" id="CHEBI:29035"/>
    </ligand>
</feature>
<dbReference type="EC" id="2.3.3.13" evidence="1"/>
<dbReference type="EMBL" id="CP000510">
    <property type="protein sequence ID" value="ABM02083.1"/>
    <property type="molecule type" value="Genomic_DNA"/>
</dbReference>
<dbReference type="RefSeq" id="WP_011768642.1">
    <property type="nucleotide sequence ID" value="NC_008709.1"/>
</dbReference>
<dbReference type="SMR" id="A1SRG8"/>
<dbReference type="STRING" id="357804.Ping_0216"/>
<dbReference type="KEGG" id="pin:Ping_0216"/>
<dbReference type="eggNOG" id="COG0119">
    <property type="taxonomic scope" value="Bacteria"/>
</dbReference>
<dbReference type="HOGENOM" id="CLU_022158_0_1_6"/>
<dbReference type="OrthoDB" id="9803573at2"/>
<dbReference type="UniPathway" id="UPA00048">
    <property type="reaction ID" value="UER00070"/>
</dbReference>
<dbReference type="Proteomes" id="UP000000639">
    <property type="component" value="Chromosome"/>
</dbReference>
<dbReference type="GO" id="GO:0005829">
    <property type="term" value="C:cytosol"/>
    <property type="evidence" value="ECO:0007669"/>
    <property type="project" value="TreeGrafter"/>
</dbReference>
<dbReference type="GO" id="GO:0003852">
    <property type="term" value="F:2-isopropylmalate synthase activity"/>
    <property type="evidence" value="ECO:0007669"/>
    <property type="project" value="UniProtKB-UniRule"/>
</dbReference>
<dbReference type="GO" id="GO:0003985">
    <property type="term" value="F:acetyl-CoA C-acetyltransferase activity"/>
    <property type="evidence" value="ECO:0007669"/>
    <property type="project" value="UniProtKB-UniRule"/>
</dbReference>
<dbReference type="GO" id="GO:0030145">
    <property type="term" value="F:manganese ion binding"/>
    <property type="evidence" value="ECO:0007669"/>
    <property type="project" value="UniProtKB-UniRule"/>
</dbReference>
<dbReference type="GO" id="GO:0009098">
    <property type="term" value="P:L-leucine biosynthetic process"/>
    <property type="evidence" value="ECO:0007669"/>
    <property type="project" value="UniProtKB-UniRule"/>
</dbReference>
<dbReference type="CDD" id="cd07940">
    <property type="entry name" value="DRE_TIM_IPMS"/>
    <property type="match status" value="1"/>
</dbReference>
<dbReference type="FunFam" id="1.10.238.260:FF:000001">
    <property type="entry name" value="2-isopropylmalate synthase"/>
    <property type="match status" value="1"/>
</dbReference>
<dbReference type="FunFam" id="3.20.20.70:FF:000010">
    <property type="entry name" value="2-isopropylmalate synthase"/>
    <property type="match status" value="1"/>
</dbReference>
<dbReference type="FunFam" id="3.30.160.270:FF:000001">
    <property type="entry name" value="2-isopropylmalate synthase"/>
    <property type="match status" value="1"/>
</dbReference>
<dbReference type="Gene3D" id="1.10.238.260">
    <property type="match status" value="1"/>
</dbReference>
<dbReference type="Gene3D" id="3.30.160.270">
    <property type="match status" value="1"/>
</dbReference>
<dbReference type="Gene3D" id="3.20.20.70">
    <property type="entry name" value="Aldolase class I"/>
    <property type="match status" value="1"/>
</dbReference>
<dbReference type="HAMAP" id="MF_01025">
    <property type="entry name" value="LeuA_type1"/>
    <property type="match status" value="1"/>
</dbReference>
<dbReference type="InterPro" id="IPR050073">
    <property type="entry name" value="2-IPM_HCS-like"/>
</dbReference>
<dbReference type="InterPro" id="IPR013709">
    <property type="entry name" value="2-isopropylmalate_synth_dimer"/>
</dbReference>
<dbReference type="InterPro" id="IPR002034">
    <property type="entry name" value="AIPM/Hcit_synth_CS"/>
</dbReference>
<dbReference type="InterPro" id="IPR013785">
    <property type="entry name" value="Aldolase_TIM"/>
</dbReference>
<dbReference type="InterPro" id="IPR054691">
    <property type="entry name" value="LeuA/HCS_post-cat"/>
</dbReference>
<dbReference type="InterPro" id="IPR036230">
    <property type="entry name" value="LeuA_allosteric_dom_sf"/>
</dbReference>
<dbReference type="InterPro" id="IPR005671">
    <property type="entry name" value="LeuA_bact_synth"/>
</dbReference>
<dbReference type="InterPro" id="IPR000891">
    <property type="entry name" value="PYR_CT"/>
</dbReference>
<dbReference type="NCBIfam" id="TIGR00973">
    <property type="entry name" value="leuA_bact"/>
    <property type="match status" value="1"/>
</dbReference>
<dbReference type="NCBIfam" id="NF002084">
    <property type="entry name" value="PRK00915.1-1"/>
    <property type="match status" value="1"/>
</dbReference>
<dbReference type="NCBIfam" id="NF002086">
    <property type="entry name" value="PRK00915.1-3"/>
    <property type="match status" value="1"/>
</dbReference>
<dbReference type="PANTHER" id="PTHR10277:SF9">
    <property type="entry name" value="2-ISOPROPYLMALATE SYNTHASE 1, CHLOROPLASTIC-RELATED"/>
    <property type="match status" value="1"/>
</dbReference>
<dbReference type="PANTHER" id="PTHR10277">
    <property type="entry name" value="HOMOCITRATE SYNTHASE-RELATED"/>
    <property type="match status" value="1"/>
</dbReference>
<dbReference type="Pfam" id="PF22617">
    <property type="entry name" value="HCS_D2"/>
    <property type="match status" value="1"/>
</dbReference>
<dbReference type="Pfam" id="PF00682">
    <property type="entry name" value="HMGL-like"/>
    <property type="match status" value="1"/>
</dbReference>
<dbReference type="Pfam" id="PF08502">
    <property type="entry name" value="LeuA_dimer"/>
    <property type="match status" value="1"/>
</dbReference>
<dbReference type="SMART" id="SM00917">
    <property type="entry name" value="LeuA_dimer"/>
    <property type="match status" value="1"/>
</dbReference>
<dbReference type="SUPFAM" id="SSF110921">
    <property type="entry name" value="2-isopropylmalate synthase LeuA, allosteric (dimerisation) domain"/>
    <property type="match status" value="1"/>
</dbReference>
<dbReference type="SUPFAM" id="SSF51569">
    <property type="entry name" value="Aldolase"/>
    <property type="match status" value="1"/>
</dbReference>
<dbReference type="PROSITE" id="PS00815">
    <property type="entry name" value="AIPM_HOMOCIT_SYNTH_1"/>
    <property type="match status" value="1"/>
</dbReference>
<dbReference type="PROSITE" id="PS00816">
    <property type="entry name" value="AIPM_HOMOCIT_SYNTH_2"/>
    <property type="match status" value="1"/>
</dbReference>
<dbReference type="PROSITE" id="PS50991">
    <property type="entry name" value="PYR_CT"/>
    <property type="match status" value="1"/>
</dbReference>
<name>LEU1_PSYIN</name>
<organism>
    <name type="scientific">Psychromonas ingrahamii (strain DSM 17664 / CCUG 51855 / 37)</name>
    <dbReference type="NCBI Taxonomy" id="357804"/>
    <lineage>
        <taxon>Bacteria</taxon>
        <taxon>Pseudomonadati</taxon>
        <taxon>Pseudomonadota</taxon>
        <taxon>Gammaproteobacteria</taxon>
        <taxon>Alteromonadales</taxon>
        <taxon>Psychromonadaceae</taxon>
        <taxon>Psychromonas</taxon>
    </lineage>
</organism>
<proteinExistence type="inferred from homology"/>
<sequence length="519" mass="56774">MSDQVIIFDTTLRDGEQALSASLTVKEKLQIAFALERLGVDVMEVGFPISSPGDFESVKTIAREIKNSRVCGLSRALPKDIDAAWNALKGADAFRIHTFISTSTIHVENKLKRTFDAVLEMGINAVKHARNYTDDVEFSCEDAGRTPIDNLCRIVEEAIKAGATTINIPDTVGYTYPSEFGGIIKTLFNRVPNIDQAIISVHCHDDLGMSVANSITAVENGARQIECTMNGLGERAGNCSLEEVAMILQTRKDKLGFTTNVNPMEISRTSQLVSQLCNMPIQANKAIVGANAFSHSSGIHQDGVLKSQNTYEIMTPESVGISTNKLNLTSRSGRHVIQHRMQELGYRDTDYDLEQLYASFVELADKKGQVFDYDLEALMFFNKVDSDPQHYRLESINVQSGSGLVATATIVMSIGEDKKVVEAATGNGPIDAAYQCLMRISGLDINMDDYHINAKGAGKDALGQVDIVATYNGQKFHGLGLSTDIIESSTKAMVHVMNHIHLAKAVAIEKEQLIHIDQV</sequence>
<gene>
    <name evidence="1" type="primary">leuA</name>
    <name type="ordered locus">Ping_0216</name>
</gene>
<accession>A1SRG8</accession>
<protein>
    <recommendedName>
        <fullName evidence="1">2-isopropylmalate synthase</fullName>
        <ecNumber evidence="1">2.3.3.13</ecNumber>
    </recommendedName>
    <alternativeName>
        <fullName evidence="1">Alpha-IPM synthase</fullName>
    </alternativeName>
    <alternativeName>
        <fullName evidence="1">Alpha-isopropylmalate synthase</fullName>
    </alternativeName>
</protein>
<comment type="function">
    <text evidence="1">Catalyzes the condensation of the acetyl group of acetyl-CoA with 3-methyl-2-oxobutanoate (2-ketoisovalerate) to form 3-carboxy-3-hydroxy-4-methylpentanoate (2-isopropylmalate).</text>
</comment>
<comment type="catalytic activity">
    <reaction evidence="1">
        <text>3-methyl-2-oxobutanoate + acetyl-CoA + H2O = (2S)-2-isopropylmalate + CoA + H(+)</text>
        <dbReference type="Rhea" id="RHEA:21524"/>
        <dbReference type="ChEBI" id="CHEBI:1178"/>
        <dbReference type="ChEBI" id="CHEBI:11851"/>
        <dbReference type="ChEBI" id="CHEBI:15377"/>
        <dbReference type="ChEBI" id="CHEBI:15378"/>
        <dbReference type="ChEBI" id="CHEBI:57287"/>
        <dbReference type="ChEBI" id="CHEBI:57288"/>
        <dbReference type="EC" id="2.3.3.13"/>
    </reaction>
</comment>
<comment type="cofactor">
    <cofactor evidence="1">
        <name>Mn(2+)</name>
        <dbReference type="ChEBI" id="CHEBI:29035"/>
    </cofactor>
</comment>
<comment type="pathway">
    <text evidence="1">Amino-acid biosynthesis; L-leucine biosynthesis; L-leucine from 3-methyl-2-oxobutanoate: step 1/4.</text>
</comment>
<comment type="subunit">
    <text evidence="1">Homodimer.</text>
</comment>
<comment type="subcellular location">
    <subcellularLocation>
        <location evidence="1">Cytoplasm</location>
    </subcellularLocation>
</comment>
<comment type="similarity">
    <text evidence="1">Belongs to the alpha-IPM synthase/homocitrate synthase family. LeuA type 1 subfamily.</text>
</comment>
<reference key="1">
    <citation type="journal article" date="2008" name="BMC Genomics">
        <title>Genomics of an extreme psychrophile, Psychromonas ingrahamii.</title>
        <authorList>
            <person name="Riley M."/>
            <person name="Staley J.T."/>
            <person name="Danchin A."/>
            <person name="Wang T.Z."/>
            <person name="Brettin T.S."/>
            <person name="Hauser L.J."/>
            <person name="Land M.L."/>
            <person name="Thompson L.S."/>
        </authorList>
    </citation>
    <scope>NUCLEOTIDE SEQUENCE [LARGE SCALE GENOMIC DNA]</scope>
    <source>
        <strain>DSM 17664 / CCUG 51855 / 37</strain>
    </source>
</reference>
<evidence type="ECO:0000255" key="1">
    <source>
        <dbReference type="HAMAP-Rule" id="MF_01025"/>
    </source>
</evidence>
<keyword id="KW-0028">Amino-acid biosynthesis</keyword>
<keyword id="KW-0100">Branched-chain amino acid biosynthesis</keyword>
<keyword id="KW-0963">Cytoplasm</keyword>
<keyword id="KW-0432">Leucine biosynthesis</keyword>
<keyword id="KW-0464">Manganese</keyword>
<keyword id="KW-0479">Metal-binding</keyword>
<keyword id="KW-1185">Reference proteome</keyword>
<keyword id="KW-0808">Transferase</keyword>